<reference key="1">
    <citation type="journal article" date="2011" name="J. Microbiol.">
        <title>Complete genome of Leptospirillum ferriphilum ML-04 provides insight into its physiology and environmental adaptation.</title>
        <authorList>
            <person name="Mi S."/>
            <person name="Song J."/>
            <person name="Lin J."/>
            <person name="Che Y."/>
            <person name="Zheng H."/>
            <person name="Lin J."/>
        </authorList>
    </citation>
    <scope>NUCLEOTIDE SEQUENCE [LARGE SCALE GENOMIC DNA]</scope>
    <source>
        <strain>ML-04</strain>
    </source>
</reference>
<reference key="2">
    <citation type="journal article" date="2017" name="Biochem. Biophys. Res. Commun.">
        <title>Identification of UBact, a ubiquitin-like protein, along with other homologous components of a conjugation system and the proteasome in different gram-negative bacteria.</title>
        <authorList>
            <person name="Lehmann G."/>
            <person name="Udasin R.G."/>
            <person name="Livneh I."/>
            <person name="Ciechanover A."/>
        </authorList>
    </citation>
    <scope>PREDICTED FUNCTION</scope>
    <source>
        <strain>ML-04</strain>
    </source>
</reference>
<organism>
    <name type="scientific">Leptospirillum ferriphilum (strain ML-04)</name>
    <dbReference type="NCBI Taxonomy" id="1048260"/>
    <lineage>
        <taxon>Bacteria</taxon>
        <taxon>Pseudomonadati</taxon>
        <taxon>Nitrospirota</taxon>
        <taxon>Nitrospiria</taxon>
        <taxon>Nitrospirales</taxon>
        <taxon>Nitrospiraceae</taxon>
        <taxon>Leptospirillum</taxon>
    </lineage>
</organism>
<gene>
    <name evidence="3" type="primary">ubact</name>
    <name evidence="6" type="ordered locus">LFML04_1974</name>
</gene>
<proteinExistence type="inferred from homology"/>
<accession>J9ZCN8</accession>
<keyword id="KW-1017">Isopeptide bond</keyword>
<keyword id="KW-0833">Ubl conjugation pathway</keyword>
<sequence length="64" mass="7435">MFNGEEVILFPERKTIPGAPGREIHKDAPAPKRPETKKTGDRLMDRMKKVDPNQSERYRQRTGE</sequence>
<comment type="function">
    <text evidence="5">May function as a protein modifier covalently attached to lysine residues of substrate proteins. This may serve to target the modified proteins for degradation by proteasomes.</text>
</comment>
<comment type="similarity">
    <text evidence="1">Belongs to the ubiquitin-like protein UBact family.</text>
</comment>
<feature type="chain" id="PRO_0000441762" description="Prokaryotic ubiquitin-like protein UBact">
    <location>
        <begin position="1"/>
        <end position="64"/>
    </location>
</feature>
<feature type="region of interest" description="Disordered" evidence="2">
    <location>
        <begin position="1"/>
        <end position="64"/>
    </location>
</feature>
<feature type="compositionally biased region" description="Basic and acidic residues" evidence="2">
    <location>
        <begin position="22"/>
        <end position="64"/>
    </location>
</feature>
<feature type="cross-link" description="Isoglutamyl lysine isopeptide (Glu-Lys) (interchain with K-? in acceptor proteins)" evidence="4">
    <location>
        <position position="64"/>
    </location>
</feature>
<evidence type="ECO:0000255" key="1">
    <source>
        <dbReference type="HAMAP-Rule" id="MF_02133"/>
    </source>
</evidence>
<evidence type="ECO:0000256" key="2">
    <source>
        <dbReference type="SAM" id="MobiDB-lite"/>
    </source>
</evidence>
<evidence type="ECO:0000303" key="3">
    <source>
    </source>
</evidence>
<evidence type="ECO:0000305" key="4"/>
<evidence type="ECO:0000305" key="5">
    <source>
    </source>
</evidence>
<evidence type="ECO:0000312" key="6">
    <source>
        <dbReference type="EMBL" id="AFS54174.1"/>
    </source>
</evidence>
<dbReference type="EMBL" id="CP002919">
    <property type="protein sequence ID" value="AFS54174.1"/>
    <property type="molecule type" value="Genomic_DNA"/>
</dbReference>
<dbReference type="RefSeq" id="WP_014961678.1">
    <property type="nucleotide sequence ID" value="NC_018649.1"/>
</dbReference>
<dbReference type="STRING" id="1048260.LFML04_1974"/>
<dbReference type="KEGG" id="lfi:LFML04_1974"/>
<dbReference type="PATRIC" id="fig|1048260.3.peg.2144"/>
<dbReference type="HOGENOM" id="CLU_207029_0_0_0"/>
<dbReference type="Proteomes" id="UP000006177">
    <property type="component" value="Chromosome"/>
</dbReference>
<dbReference type="GO" id="GO:0031386">
    <property type="term" value="F:protein tag activity"/>
    <property type="evidence" value="ECO:0007669"/>
    <property type="project" value="UniProtKB-UniRule"/>
</dbReference>
<dbReference type="HAMAP" id="MF_02133">
    <property type="entry name" value="UBact"/>
    <property type="match status" value="1"/>
</dbReference>
<dbReference type="InterPro" id="IPR037543">
    <property type="entry name" value="UBact"/>
</dbReference>
<dbReference type="NCBIfam" id="NF033388">
    <property type="entry name" value="ubiq_like_UBact"/>
    <property type="match status" value="1"/>
</dbReference>
<dbReference type="Pfam" id="PF20513">
    <property type="entry name" value="UBact"/>
    <property type="match status" value="1"/>
</dbReference>
<name>UBACT_LEPFM</name>
<protein>
    <recommendedName>
        <fullName evidence="3">Prokaryotic ubiquitin-like protein UBact</fullName>
    </recommendedName>
</protein>